<proteinExistence type="inferred from homology"/>
<protein>
    <recommendedName>
        <fullName evidence="1">Septation ring formation regulator EzrA</fullName>
    </recommendedName>
</protein>
<comment type="function">
    <text evidence="1">Negative regulator of FtsZ ring formation; modulates the frequency and position of FtsZ ring formation. Inhibits FtsZ ring formation at polar sites. Interacts either with FtsZ or with one of its binding partners to promote depolymerization.</text>
</comment>
<comment type="subcellular location">
    <subcellularLocation>
        <location>Cell membrane</location>
        <topology>Single-pass membrane protein</topology>
    </subcellularLocation>
    <text evidence="1">Colocalized with FtsZ to the nascent septal site.</text>
</comment>
<comment type="similarity">
    <text evidence="1">Belongs to the EzrA family.</text>
</comment>
<organism>
    <name type="scientific">Bacillus cereus (strain ATCC 14579 / DSM 31 / CCUG 7414 / JCM 2152 / NBRC 15305 / NCIMB 9373 / NCTC 2599 / NRRL B-3711)</name>
    <dbReference type="NCBI Taxonomy" id="226900"/>
    <lineage>
        <taxon>Bacteria</taxon>
        <taxon>Bacillati</taxon>
        <taxon>Bacillota</taxon>
        <taxon>Bacilli</taxon>
        <taxon>Bacillales</taxon>
        <taxon>Bacillaceae</taxon>
        <taxon>Bacillus</taxon>
        <taxon>Bacillus cereus group</taxon>
    </lineage>
</organism>
<dbReference type="EMBL" id="AE016877">
    <property type="protein sequence ID" value="AAP11556.1"/>
    <property type="molecule type" value="Genomic_DNA"/>
</dbReference>
<dbReference type="RefSeq" id="NP_834355.1">
    <property type="nucleotide sequence ID" value="NC_004722.1"/>
</dbReference>
<dbReference type="RefSeq" id="WP_000377302.1">
    <property type="nucleotide sequence ID" value="NC_004722.1"/>
</dbReference>
<dbReference type="SMR" id="Q817A9"/>
<dbReference type="STRING" id="226900.BC_4649"/>
<dbReference type="KEGG" id="bce:BC4649"/>
<dbReference type="PATRIC" id="fig|226900.8.peg.4813"/>
<dbReference type="HOGENOM" id="CLU_034079_1_0_9"/>
<dbReference type="Proteomes" id="UP000001417">
    <property type="component" value="Chromosome"/>
</dbReference>
<dbReference type="GO" id="GO:0005886">
    <property type="term" value="C:plasma membrane"/>
    <property type="evidence" value="ECO:0007669"/>
    <property type="project" value="UniProtKB-SubCell"/>
</dbReference>
<dbReference type="GO" id="GO:0005940">
    <property type="term" value="C:septin ring"/>
    <property type="evidence" value="ECO:0007669"/>
    <property type="project" value="InterPro"/>
</dbReference>
<dbReference type="GO" id="GO:0000917">
    <property type="term" value="P:division septum assembly"/>
    <property type="evidence" value="ECO:0007669"/>
    <property type="project" value="UniProtKB-KW"/>
</dbReference>
<dbReference type="GO" id="GO:0000921">
    <property type="term" value="P:septin ring assembly"/>
    <property type="evidence" value="ECO:0007669"/>
    <property type="project" value="InterPro"/>
</dbReference>
<dbReference type="HAMAP" id="MF_00728">
    <property type="entry name" value="EzrA"/>
    <property type="match status" value="1"/>
</dbReference>
<dbReference type="InterPro" id="IPR010379">
    <property type="entry name" value="EzrA"/>
</dbReference>
<dbReference type="NCBIfam" id="NF003411">
    <property type="entry name" value="PRK04778.1-5"/>
    <property type="match status" value="1"/>
</dbReference>
<dbReference type="NCBIfam" id="NF003413">
    <property type="entry name" value="PRK04778.1-7"/>
    <property type="match status" value="1"/>
</dbReference>
<dbReference type="Pfam" id="PF06160">
    <property type="entry name" value="EzrA"/>
    <property type="match status" value="1"/>
</dbReference>
<gene>
    <name evidence="1" type="primary">ezrA</name>
    <name type="ordered locus">BC_4649</name>
</gene>
<evidence type="ECO:0000255" key="1">
    <source>
        <dbReference type="HAMAP-Rule" id="MF_00728"/>
    </source>
</evidence>
<name>EZRA_BACCR</name>
<keyword id="KW-0131">Cell cycle</keyword>
<keyword id="KW-0132">Cell division</keyword>
<keyword id="KW-1003">Cell membrane</keyword>
<keyword id="KW-0175">Coiled coil</keyword>
<keyword id="KW-0472">Membrane</keyword>
<keyword id="KW-1185">Reference proteome</keyword>
<keyword id="KW-0717">Septation</keyword>
<keyword id="KW-0812">Transmembrane</keyword>
<keyword id="KW-1133">Transmembrane helix</keyword>
<feature type="chain" id="PRO_0000172868" description="Septation ring formation regulator EzrA">
    <location>
        <begin position="1"/>
        <end position="570"/>
    </location>
</feature>
<feature type="topological domain" description="Extracellular" evidence="1">
    <location>
        <begin position="1"/>
        <end position="6"/>
    </location>
</feature>
<feature type="transmembrane region" description="Helical" evidence="1">
    <location>
        <begin position="7"/>
        <end position="25"/>
    </location>
</feature>
<feature type="topological domain" description="Cytoplasmic" evidence="1">
    <location>
        <begin position="26"/>
        <end position="570"/>
    </location>
</feature>
<feature type="coiled-coil region" evidence="1">
    <location>
        <begin position="115"/>
        <end position="149"/>
    </location>
</feature>
<feature type="coiled-coil region" evidence="1">
    <location>
        <begin position="272"/>
        <end position="304"/>
    </location>
</feature>
<feature type="coiled-coil region" evidence="1">
    <location>
        <begin position="355"/>
        <end position="429"/>
    </location>
</feature>
<reference key="1">
    <citation type="journal article" date="2003" name="Nature">
        <title>Genome sequence of Bacillus cereus and comparative analysis with Bacillus anthracis.</title>
        <authorList>
            <person name="Ivanova N."/>
            <person name="Sorokin A."/>
            <person name="Anderson I."/>
            <person name="Galleron N."/>
            <person name="Candelon B."/>
            <person name="Kapatral V."/>
            <person name="Bhattacharyya A."/>
            <person name="Reznik G."/>
            <person name="Mikhailova N."/>
            <person name="Lapidus A."/>
            <person name="Chu L."/>
            <person name="Mazur M."/>
            <person name="Goltsman E."/>
            <person name="Larsen N."/>
            <person name="D'Souza M."/>
            <person name="Walunas T."/>
            <person name="Grechkin Y."/>
            <person name="Pusch G."/>
            <person name="Haselkorn R."/>
            <person name="Fonstein M."/>
            <person name="Ehrlich S.D."/>
            <person name="Overbeek R."/>
            <person name="Kyrpides N.C."/>
        </authorList>
    </citation>
    <scope>NUCLEOTIDE SEQUENCE [LARGE SCALE GENOMIC DNA]</scope>
    <source>
        <strain>ATCC 14579 / DSM 31 / CCUG 7414 / JCM 2152 / NBRC 15305 / NCIMB 9373 / NCTC 2599 / NRRL B-3711</strain>
    </source>
</reference>
<accession>Q817A9</accession>
<sequence>MDSILTIVIIVVSSILVLLMIELVIRNRSYKDIEALEQWKQEIKDKPVADELKRVKDLNMTGQTEELFGKWREEWDEIVSTTLPKADKDLAQARKFASQFSFRKAKHAMNESISGLDDADNRITDILNELQQLLESHEKNSSEIEGLRDTYRSMKKSVLAHRHMYGAAEQKIEEMLDAESEKFKTFEEATNNGDYLKAREIVISLEEGLADLEIIIHQIPDLLVECQATLPVQLEDLLHGHNDMVRQGYVLDYLEVPKEVRDMTKQLQTCLMDIQELHITEAAEKVENLKTRLDGFYDQLEQEVHARHYVEQKTLSVYDDLEEMRIETIETKTETQLVKQSYQLQDKDIESQKVIEKQMHILTKRFEMLQLRVAEQDIAFSIIREELEEVYEQCETLKVLHAEYKEMLQAMRKEEFEAREKLQEMRNTIFETKRFMQKSNLPGLPESIMEDLKRGQMAMQAVYEQLEVKPLNMNAVNSSLEEAYTTVNGVAEMTEELIGQAYLVEKLIQYGNRYRSHDENLAESLNYAEKLFREYQYDAALEQAASVLEQLEPGVVQKIAEYVDNDQTLS</sequence>